<gene>
    <name type="ORF">A57R</name>
</gene>
<comment type="similarity">
    <text evidence="2">Belongs to the guanylate kinase family.</text>
</comment>
<sequence>MEREGVDYHYVNREAIWKGIAAGNFLEHTEFLGNIYGTSKTAVNTAAINNRICVMDLNIDGVRSFKNTYLMPYSVYIRPTSLKMVETKLRCRNTEANDEIHRRVILAKTDMDEANEAGLFDTIIIEDDVNLAYSKLIQILQDRIRMYFNTN</sequence>
<feature type="chain" id="PRO_0000170656" description="Guanylate kinase homolog">
    <location>
        <begin position="1"/>
        <end position="151"/>
    </location>
</feature>
<feature type="domain" description="Guanylate kinase-like" evidence="1">
    <location>
        <begin position="1"/>
        <end position="141"/>
    </location>
</feature>
<organism>
    <name type="scientific">Vaccinia virus (strain Copenhagen)</name>
    <name type="common">VACV</name>
    <dbReference type="NCBI Taxonomy" id="10249"/>
    <lineage>
        <taxon>Viruses</taxon>
        <taxon>Varidnaviria</taxon>
        <taxon>Bamfordvirae</taxon>
        <taxon>Nucleocytoviricota</taxon>
        <taxon>Pokkesviricetes</taxon>
        <taxon>Chitovirales</taxon>
        <taxon>Poxviridae</taxon>
        <taxon>Chordopoxvirinae</taxon>
        <taxon>Orthopoxvirus</taxon>
        <taxon>Vaccinia virus</taxon>
    </lineage>
</organism>
<evidence type="ECO:0000255" key="1">
    <source>
        <dbReference type="PROSITE-ProRule" id="PRU00100"/>
    </source>
</evidence>
<evidence type="ECO:0000305" key="2"/>
<dbReference type="EMBL" id="M35027">
    <property type="protein sequence ID" value="AAA48193.1"/>
    <property type="molecule type" value="Genomic_DNA"/>
</dbReference>
<dbReference type="PIR" id="E42523">
    <property type="entry name" value="E42523"/>
</dbReference>
<dbReference type="SMR" id="P21074"/>
<dbReference type="Proteomes" id="UP000008269">
    <property type="component" value="Segment"/>
</dbReference>
<dbReference type="GO" id="GO:0004385">
    <property type="term" value="F:guanylate kinase activity"/>
    <property type="evidence" value="ECO:0007669"/>
    <property type="project" value="TreeGrafter"/>
</dbReference>
<dbReference type="CDD" id="cd00071">
    <property type="entry name" value="GMPK"/>
    <property type="match status" value="1"/>
</dbReference>
<dbReference type="Gene3D" id="3.40.50.300">
    <property type="entry name" value="P-loop containing nucleotide triphosphate hydrolases"/>
    <property type="match status" value="1"/>
</dbReference>
<dbReference type="InterPro" id="IPR008145">
    <property type="entry name" value="GK/Ca_channel_bsu"/>
</dbReference>
<dbReference type="InterPro" id="IPR008144">
    <property type="entry name" value="Guanylate_kin-like_dom"/>
</dbReference>
<dbReference type="InterPro" id="IPR027417">
    <property type="entry name" value="P-loop_NTPase"/>
</dbReference>
<dbReference type="PANTHER" id="PTHR23117:SF13">
    <property type="entry name" value="GUANYLATE KINASE"/>
    <property type="match status" value="1"/>
</dbReference>
<dbReference type="PANTHER" id="PTHR23117">
    <property type="entry name" value="GUANYLATE KINASE-RELATED"/>
    <property type="match status" value="1"/>
</dbReference>
<dbReference type="Pfam" id="PF00625">
    <property type="entry name" value="Guanylate_kin"/>
    <property type="match status" value="1"/>
</dbReference>
<dbReference type="SMART" id="SM00072">
    <property type="entry name" value="GuKc"/>
    <property type="match status" value="1"/>
</dbReference>
<dbReference type="SUPFAM" id="SSF52540">
    <property type="entry name" value="P-loop containing nucleoside triphosphate hydrolases"/>
    <property type="match status" value="1"/>
</dbReference>
<dbReference type="PROSITE" id="PS50052">
    <property type="entry name" value="GUANYLATE_KINASE_2"/>
    <property type="match status" value="1"/>
</dbReference>
<organismHost>
    <name type="scientific">Homo sapiens</name>
    <name type="common">Human</name>
    <dbReference type="NCBI Taxonomy" id="9606"/>
</organismHost>
<name>A57_VACCC</name>
<accession>P21074</accession>
<protein>
    <recommendedName>
        <fullName>Guanylate kinase homolog</fullName>
    </recommendedName>
</protein>
<keyword id="KW-0418">Kinase</keyword>
<keyword id="KW-1185">Reference proteome</keyword>
<keyword id="KW-0808">Transferase</keyword>
<reference key="1">
    <citation type="journal article" date="1990" name="Virology">
        <title>The complete DNA sequence of vaccinia virus.</title>
        <authorList>
            <person name="Goebel S.J."/>
            <person name="Johnson G.P."/>
            <person name="Perkus M.E."/>
            <person name="Davis S.W."/>
            <person name="Winslow J.P."/>
            <person name="Paoletti E."/>
        </authorList>
    </citation>
    <scope>NUCLEOTIDE SEQUENCE [LARGE SCALE GENOMIC DNA]</scope>
</reference>
<reference key="2">
    <citation type="journal article" date="1990" name="Virology">
        <title>Appendix to 'The complete DNA sequence of vaccinia virus'.</title>
        <authorList>
            <person name="Goebel S.J."/>
            <person name="Johnson G.P."/>
            <person name="Perkus M.E."/>
            <person name="Davis S.W."/>
            <person name="Winslow J.P."/>
            <person name="Paoletti E."/>
        </authorList>
    </citation>
    <scope>NUCLEOTIDE SEQUENCE [LARGE SCALE GENOMIC DNA]</scope>
</reference>
<proteinExistence type="inferred from homology"/>